<proteinExistence type="evidence at protein level"/>
<accession>O95498</accession>
<accession>A0AUZ3</accession>
<accession>A6NDY1</accession>
<accession>A8K4E3</accession>
<accession>A8K7W0</accession>
<accession>B2DFZ0</accession>
<accession>B2DFZ1</accession>
<accession>B2DFZ2</accession>
<accession>B2DFZ3</accession>
<accession>F6XL73</accession>
<accession>Q2XUN1</accession>
<accession>Q9UJF3</accession>
<accession>Q9UMW2</accession>
<comment type="function">
    <text evidence="4">Amidohydrolase that hydrolyzes specifically one of the carboamide linkages in D-pantetheine thus recycling pantothenic acid (vitamin B5) and releasing cysteamine (PubMed:11491533). Involved in the thymus homing of bone marrow cells. May regulate beta-2 integrin-mediated cell adhesion, migration and motility of neutrophil.</text>
</comment>
<comment type="catalytic activity">
    <reaction evidence="4">
        <text>(R)-pantetheine + H2O = cysteamine + (R)-pantothenate</text>
        <dbReference type="Rhea" id="RHEA:13445"/>
        <dbReference type="ChEBI" id="CHEBI:15377"/>
        <dbReference type="ChEBI" id="CHEBI:16753"/>
        <dbReference type="ChEBI" id="CHEBI:29032"/>
        <dbReference type="ChEBI" id="CHEBI:58029"/>
        <dbReference type="EC" id="3.5.1.92"/>
    </reaction>
    <physiologicalReaction direction="left-to-right" evidence="16">
        <dbReference type="Rhea" id="RHEA:13446"/>
    </physiologicalReaction>
</comment>
<comment type="interaction">
    <interactant intactId="EBI-21494555">
        <id>O95498</id>
    </interactant>
    <interactant intactId="EBI-399080">
        <id>Q92993</id>
        <label>KAT5</label>
    </interactant>
    <organismsDiffer>false</organismsDiffer>
    <experiments>3</experiments>
</comment>
<comment type="interaction">
    <interactant intactId="EBI-21494555">
        <id>O95498</id>
    </interactant>
    <interactant intactId="EBI-11742507">
        <id>Q8TAP4-4</id>
        <label>LMO3</label>
    </interactant>
    <organismsDiffer>false</organismsDiffer>
    <experiments>3</experiments>
</comment>
<comment type="interaction">
    <interactant intactId="EBI-21494555">
        <id>O95498</id>
    </interactant>
    <interactant intactId="EBI-1383528">
        <id>P17252</id>
        <label>PRKCA</label>
    </interactant>
    <organismsDiffer>false</organismsDiffer>
    <experiments>3</experiments>
</comment>
<comment type="interaction">
    <interactant intactId="EBI-21494555">
        <id>O95498</id>
    </interactant>
    <interactant intactId="EBI-9090795">
        <id>Q15047-2</id>
        <label>SETDB1</label>
    </interactant>
    <organismsDiffer>false</organismsDiffer>
    <experiments>3</experiments>
</comment>
<comment type="interaction">
    <interactant intactId="EBI-21494555">
        <id>O95498</id>
    </interactant>
    <interactant intactId="EBI-359832">
        <id>P61981</id>
        <label>YWHAG</label>
    </interactant>
    <organismsDiffer>false</organismsDiffer>
    <experiments>3</experiments>
</comment>
<comment type="subcellular location">
    <subcellularLocation>
        <location evidence="15">Cell membrane</location>
        <topology evidence="15">Lipid-anchor</topology>
        <topology evidence="15">GPI-anchor</topology>
    </subcellularLocation>
</comment>
<comment type="alternative products">
    <event type="alternative splicing"/>
    <isoform>
        <id>O95498-1</id>
        <name>1</name>
        <sequence type="displayed"/>
    </isoform>
    <isoform>
        <id>O95498-2</id>
        <name>2</name>
        <name>GPI-80 variant protein 3</name>
        <sequence type="described" ref="VSP_038557"/>
    </isoform>
    <isoform>
        <id>O95498-3</id>
        <name>3</name>
        <name>GPI-80 variant protein 2</name>
        <sequence type="described" ref="VSP_038558 VSP_038559"/>
    </isoform>
    <isoform>
        <id>O95498-4</id>
        <name>4</name>
        <name>GPI-80 variant protein 1</name>
        <sequence type="described" ref="VSP_038556 VSP_038560"/>
    </isoform>
    <isoform>
        <id>O95498-5</id>
        <name>5</name>
        <name>GPI-80 variant protein 4</name>
        <sequence type="described" ref="VSP_038554 VSP_038555"/>
    </isoform>
    <isoform>
        <id>O95498-6</id>
        <name>6</name>
        <sequence type="described" ref="VSP_044912"/>
    </isoform>
</comment>
<comment type="tissue specificity">
    <text evidence="9">Widely expressed with higher expression in spleen and blood.</text>
</comment>
<comment type="miscellaneous">
    <molecule>Isoform 3</molecule>
    <text evidence="15">May be produced at very low levels due to a premature stop codon in the mRNA, leading to nonsense-mediated mRNA decay.</text>
</comment>
<comment type="miscellaneous">
    <molecule>Isoform 4</molecule>
    <text evidence="15">May be produced at very low levels due to a premature stop codon in the mRNA, leading to nonsense-mediated mRNA decay.</text>
</comment>
<comment type="miscellaneous">
    <molecule>Isoform 5</molecule>
    <text evidence="15">May be produced at very low levels due to a premature stop codon in the mRNA, leading to nonsense-mediated mRNA decay.</text>
</comment>
<comment type="similarity">
    <text evidence="15">Belongs to the carbon-nitrogen hydrolase superfamily. BTD/VNN family.</text>
</comment>
<dbReference type="EC" id="3.5.1.92" evidence="4"/>
<dbReference type="EMBL" id="AJ132100">
    <property type="protein sequence ID" value="CAA10569.1"/>
    <property type="molecule type" value="mRNA"/>
</dbReference>
<dbReference type="EMBL" id="D89974">
    <property type="protein sequence ID" value="BAA82525.1"/>
    <property type="molecule type" value="mRNA"/>
</dbReference>
<dbReference type="EMBL" id="AB435062">
    <property type="protein sequence ID" value="BAG30934.1"/>
    <property type="molecule type" value="mRNA"/>
</dbReference>
<dbReference type="EMBL" id="AB435063">
    <property type="protein sequence ID" value="BAG30935.1"/>
    <property type="molecule type" value="mRNA"/>
</dbReference>
<dbReference type="EMBL" id="AB435064">
    <property type="protein sequence ID" value="BAG30936.1"/>
    <property type="molecule type" value="mRNA"/>
</dbReference>
<dbReference type="EMBL" id="AB435065">
    <property type="protein sequence ID" value="BAG30937.1"/>
    <property type="molecule type" value="mRNA"/>
</dbReference>
<dbReference type="EMBL" id="AB026705">
    <property type="protein sequence ID" value="BAB61019.1"/>
    <property type="molecule type" value="mRNA"/>
</dbReference>
<dbReference type="EMBL" id="AK290908">
    <property type="protein sequence ID" value="BAF83597.1"/>
    <property type="molecule type" value="mRNA"/>
</dbReference>
<dbReference type="EMBL" id="AK292125">
    <property type="protein sequence ID" value="BAF84814.1"/>
    <property type="molecule type" value="mRNA"/>
</dbReference>
<dbReference type="EMBL" id="DQ249347">
    <property type="protein sequence ID" value="ABB72673.1"/>
    <property type="molecule type" value="Genomic_DNA"/>
</dbReference>
<dbReference type="EMBL" id="AL032821">
    <property type="status" value="NOT_ANNOTATED_CDS"/>
    <property type="molecule type" value="Genomic_DNA"/>
</dbReference>
<dbReference type="EMBL" id="CH471051">
    <property type="protein sequence ID" value="EAW48016.1"/>
    <property type="molecule type" value="Genomic_DNA"/>
</dbReference>
<dbReference type="EMBL" id="BC126145">
    <property type="protein sequence ID" value="AAI26146.1"/>
    <property type="molecule type" value="mRNA"/>
</dbReference>
<dbReference type="EMBL" id="BC126147">
    <property type="protein sequence ID" value="AAI26148.1"/>
    <property type="molecule type" value="mRNA"/>
</dbReference>
<dbReference type="CCDS" id="CCDS5161.1">
    <molecule id="O95498-1"/>
</dbReference>
<dbReference type="CCDS" id="CCDS5162.1">
    <molecule id="O95498-6"/>
</dbReference>
<dbReference type="CCDS" id="CCDS56451.1">
    <molecule id="O95498-2"/>
</dbReference>
<dbReference type="RefSeq" id="NP_001229279.2">
    <molecule id="O95498-2"/>
    <property type="nucleotide sequence ID" value="NM_001242350.3"/>
</dbReference>
<dbReference type="RefSeq" id="NP_004656.2">
    <molecule id="O95498-1"/>
    <property type="nucleotide sequence ID" value="NM_004665.4"/>
</dbReference>
<dbReference type="RefSeq" id="NP_511043.2">
    <molecule id="O95498-6"/>
    <property type="nucleotide sequence ID" value="NM_078488.3"/>
</dbReference>
<dbReference type="RefSeq" id="XP_006715656.1">
    <molecule id="O95498-6"/>
    <property type="nucleotide sequence ID" value="XM_006715593.4"/>
</dbReference>
<dbReference type="RefSeq" id="XP_016866896.1">
    <property type="nucleotide sequence ID" value="XM_017011407.1"/>
</dbReference>
<dbReference type="RefSeq" id="XP_047275433.1">
    <molecule id="O95498-1"/>
    <property type="nucleotide sequence ID" value="XM_047419477.1"/>
</dbReference>
<dbReference type="RefSeq" id="XP_047275434.1">
    <molecule id="O95498-1"/>
    <property type="nucleotide sequence ID" value="XM_047419478.1"/>
</dbReference>
<dbReference type="RefSeq" id="XP_047275435.1">
    <molecule id="O95498-1"/>
    <property type="nucleotide sequence ID" value="XM_047419479.1"/>
</dbReference>
<dbReference type="RefSeq" id="XP_047275437.1">
    <molecule id="O95498-6"/>
    <property type="nucleotide sequence ID" value="XM_047419481.1"/>
</dbReference>
<dbReference type="SMR" id="O95498"/>
<dbReference type="BioGRID" id="114394">
    <property type="interactions" value="52"/>
</dbReference>
<dbReference type="FunCoup" id="O95498">
    <property type="interactions" value="81"/>
</dbReference>
<dbReference type="IntAct" id="O95498">
    <property type="interactions" value="52"/>
</dbReference>
<dbReference type="STRING" id="9606.ENSP00000322276"/>
<dbReference type="GlyConnect" id="2089">
    <property type="glycosylation" value="1 N-Linked glycan (1 site)"/>
</dbReference>
<dbReference type="GlyCosmos" id="O95498">
    <property type="glycosylation" value="6 sites, 2 glycans"/>
</dbReference>
<dbReference type="GlyGen" id="O95498">
    <property type="glycosylation" value="7 sites, 2 N-linked glycans (1 site)"/>
</dbReference>
<dbReference type="iPTMnet" id="O95498"/>
<dbReference type="PhosphoSitePlus" id="O95498"/>
<dbReference type="SwissPalm" id="O95498"/>
<dbReference type="BioMuta" id="VNN2"/>
<dbReference type="jPOST" id="O95498"/>
<dbReference type="MassIVE" id="O95498"/>
<dbReference type="PaxDb" id="9606-ENSP00000322276"/>
<dbReference type="PeptideAtlas" id="O95498"/>
<dbReference type="ProteomicsDB" id="28159"/>
<dbReference type="ProteomicsDB" id="50925">
    <molecule id="O95498-1"/>
</dbReference>
<dbReference type="ProteomicsDB" id="50926">
    <molecule id="O95498-2"/>
</dbReference>
<dbReference type="ProteomicsDB" id="50927">
    <molecule id="O95498-3"/>
</dbReference>
<dbReference type="ProteomicsDB" id="50928">
    <molecule id="O95498-4"/>
</dbReference>
<dbReference type="ProteomicsDB" id="50929">
    <molecule id="O95498-5"/>
</dbReference>
<dbReference type="Antibodypedia" id="32943">
    <property type="antibodies" value="139 antibodies from 23 providers"/>
</dbReference>
<dbReference type="DNASU" id="8875"/>
<dbReference type="Ensembl" id="ENST00000326499.11">
    <molecule id="O95498-1"/>
    <property type="protein sequence ID" value="ENSP00000322276.6"/>
    <property type="gene ID" value="ENSG00000112303.14"/>
</dbReference>
<dbReference type="Ensembl" id="ENST00000525270.5">
    <molecule id="O95498-6"/>
    <property type="protein sequence ID" value="ENSP00000436822.1"/>
    <property type="gene ID" value="ENSG00000112303.14"/>
</dbReference>
<dbReference type="Ensembl" id="ENST00000525289.5">
    <molecule id="O95498-2"/>
    <property type="protein sequence ID" value="ENSP00000436935.1"/>
    <property type="gene ID" value="ENSG00000112303.14"/>
</dbReference>
<dbReference type="Ensembl" id="ENST00000525674.5">
    <molecule id="O95498-4"/>
    <property type="protein sequence ID" value="ENSP00000436863.1"/>
    <property type="gene ID" value="ENSG00000112303.14"/>
</dbReference>
<dbReference type="Ensembl" id="ENST00000532053.5">
    <molecule id="O95498-3"/>
    <property type="protein sequence ID" value="ENSP00000434077.1"/>
    <property type="gene ID" value="ENSG00000112303.14"/>
</dbReference>
<dbReference type="GeneID" id="8875"/>
<dbReference type="KEGG" id="hsa:8875"/>
<dbReference type="MANE-Select" id="ENST00000326499.11">
    <property type="protein sequence ID" value="ENSP00000322276.6"/>
    <property type="RefSeq nucleotide sequence ID" value="NM_004665.6"/>
    <property type="RefSeq protein sequence ID" value="NP_004656.3"/>
</dbReference>
<dbReference type="UCSC" id="uc003qdt.4">
    <molecule id="O95498-1"/>
    <property type="organism name" value="human"/>
</dbReference>
<dbReference type="AGR" id="HGNC:12706"/>
<dbReference type="CTD" id="8875"/>
<dbReference type="DisGeNET" id="8875"/>
<dbReference type="GeneCards" id="VNN2"/>
<dbReference type="HGNC" id="HGNC:12706">
    <property type="gene designation" value="VNN2"/>
</dbReference>
<dbReference type="HPA" id="ENSG00000112303">
    <property type="expression patterns" value="Tissue enhanced (bone marrow, lymphoid tissue)"/>
</dbReference>
<dbReference type="MIM" id="603571">
    <property type="type" value="gene"/>
</dbReference>
<dbReference type="neXtProt" id="NX_O95498"/>
<dbReference type="OpenTargets" id="ENSG00000112303"/>
<dbReference type="PharmGKB" id="PA37322"/>
<dbReference type="VEuPathDB" id="HostDB:ENSG00000112303"/>
<dbReference type="eggNOG" id="KOG0806">
    <property type="taxonomic scope" value="Eukaryota"/>
</dbReference>
<dbReference type="GeneTree" id="ENSGT00390000013823"/>
<dbReference type="HOGENOM" id="CLU_033209_2_0_1"/>
<dbReference type="InParanoid" id="O95498"/>
<dbReference type="OMA" id="FGFNPVQ"/>
<dbReference type="OrthoDB" id="10250282at2759"/>
<dbReference type="PAN-GO" id="O95498">
    <property type="GO annotations" value="2 GO annotations based on evolutionary models"/>
</dbReference>
<dbReference type="PhylomeDB" id="O95498"/>
<dbReference type="TreeFam" id="TF323645"/>
<dbReference type="BRENDA" id="3.5.1.92">
    <property type="organism ID" value="2681"/>
</dbReference>
<dbReference type="PathwayCommons" id="O95498"/>
<dbReference type="Reactome" id="R-HSA-163125">
    <property type="pathway name" value="Post-translational modification: synthesis of GPI-anchored proteins"/>
</dbReference>
<dbReference type="Reactome" id="R-HSA-199220">
    <property type="pathway name" value="Vitamin B5 (pantothenate) metabolism"/>
</dbReference>
<dbReference type="SignaLink" id="O95498"/>
<dbReference type="BioGRID-ORCS" id="8875">
    <property type="hits" value="39 hits in 1149 CRISPR screens"/>
</dbReference>
<dbReference type="GeneWiki" id="VNN2"/>
<dbReference type="GenomeRNAi" id="8875"/>
<dbReference type="Pharos" id="O95498">
    <property type="development level" value="Tbio"/>
</dbReference>
<dbReference type="PRO" id="PR:O95498"/>
<dbReference type="Proteomes" id="UP000005640">
    <property type="component" value="Chromosome 6"/>
</dbReference>
<dbReference type="RNAct" id="O95498">
    <property type="molecule type" value="protein"/>
</dbReference>
<dbReference type="Bgee" id="ENSG00000112303">
    <property type="expression patterns" value="Expressed in blood and 121 other cell types or tissues"/>
</dbReference>
<dbReference type="ExpressionAtlas" id="O95498">
    <property type="expression patterns" value="baseline and differential"/>
</dbReference>
<dbReference type="GO" id="GO:0005576">
    <property type="term" value="C:extracellular region"/>
    <property type="evidence" value="ECO:0000304"/>
    <property type="project" value="Reactome"/>
</dbReference>
<dbReference type="GO" id="GO:0005886">
    <property type="term" value="C:plasma membrane"/>
    <property type="evidence" value="ECO:0000304"/>
    <property type="project" value="Reactome"/>
</dbReference>
<dbReference type="GO" id="GO:0098552">
    <property type="term" value="C:side of membrane"/>
    <property type="evidence" value="ECO:0007669"/>
    <property type="project" value="UniProtKB-KW"/>
</dbReference>
<dbReference type="GO" id="GO:0017159">
    <property type="term" value="F:pantetheine hydrolase activity"/>
    <property type="evidence" value="ECO:0000314"/>
    <property type="project" value="BHF-UCL"/>
</dbReference>
<dbReference type="GO" id="GO:0015939">
    <property type="term" value="P:pantothenate metabolic process"/>
    <property type="evidence" value="ECO:0000314"/>
    <property type="project" value="BHF-UCL"/>
</dbReference>
<dbReference type="CDD" id="cd07567">
    <property type="entry name" value="biotinidase_like"/>
    <property type="match status" value="1"/>
</dbReference>
<dbReference type="FunFam" id="3.60.110.10:FF:000001">
    <property type="entry name" value="biotinidase isoform X1"/>
    <property type="match status" value="1"/>
</dbReference>
<dbReference type="Gene3D" id="3.60.110.10">
    <property type="entry name" value="Carbon-nitrogen hydrolase"/>
    <property type="match status" value="1"/>
</dbReference>
<dbReference type="InterPro" id="IPR012101">
    <property type="entry name" value="Biotinidase-like_euk"/>
</dbReference>
<dbReference type="InterPro" id="IPR040154">
    <property type="entry name" value="Biotinidase/VNN"/>
</dbReference>
<dbReference type="InterPro" id="IPR003010">
    <property type="entry name" value="C-N_Hydrolase"/>
</dbReference>
<dbReference type="InterPro" id="IPR036526">
    <property type="entry name" value="C-N_Hydrolase_sf"/>
</dbReference>
<dbReference type="InterPro" id="IPR043957">
    <property type="entry name" value="Vanin_C"/>
</dbReference>
<dbReference type="PANTHER" id="PTHR10609">
    <property type="entry name" value="BIOTINIDASE-RELATED"/>
    <property type="match status" value="1"/>
</dbReference>
<dbReference type="PANTHER" id="PTHR10609:SF15">
    <property type="entry name" value="PANTETHEINE HYDROLASE VNN2"/>
    <property type="match status" value="1"/>
</dbReference>
<dbReference type="Pfam" id="PF00795">
    <property type="entry name" value="CN_hydrolase"/>
    <property type="match status" value="1"/>
</dbReference>
<dbReference type="Pfam" id="PF19018">
    <property type="entry name" value="Vanin_C"/>
    <property type="match status" value="1"/>
</dbReference>
<dbReference type="PIRSF" id="PIRSF011861">
    <property type="entry name" value="Biotinidase"/>
    <property type="match status" value="1"/>
</dbReference>
<dbReference type="SUPFAM" id="SSF56317">
    <property type="entry name" value="Carbon-nitrogen hydrolase"/>
    <property type="match status" value="1"/>
</dbReference>
<dbReference type="PROSITE" id="PS50263">
    <property type="entry name" value="CN_HYDROLASE"/>
    <property type="match status" value="1"/>
</dbReference>
<gene>
    <name evidence="17" type="primary">VNN2</name>
</gene>
<evidence type="ECO:0000255" key="1"/>
<evidence type="ECO:0000255" key="2">
    <source>
        <dbReference type="PROSITE-ProRule" id="PRU00054"/>
    </source>
</evidence>
<evidence type="ECO:0000269" key="3">
    <source>
    </source>
</evidence>
<evidence type="ECO:0000269" key="4">
    <source>
    </source>
</evidence>
<evidence type="ECO:0000269" key="5">
    <source>
    </source>
</evidence>
<evidence type="ECO:0000269" key="6">
    <source>
    </source>
</evidence>
<evidence type="ECO:0000269" key="7">
    <source>
    </source>
</evidence>
<evidence type="ECO:0000269" key="8">
    <source>
    </source>
</evidence>
<evidence type="ECO:0000269" key="9">
    <source>
    </source>
</evidence>
<evidence type="ECO:0000269" key="10">
    <source>
    </source>
</evidence>
<evidence type="ECO:0000269" key="11">
    <source ref="4"/>
</evidence>
<evidence type="ECO:0000269" key="12">
    <source ref="6"/>
</evidence>
<evidence type="ECO:0000303" key="13">
    <source>
    </source>
</evidence>
<evidence type="ECO:0000303" key="14">
    <source>
    </source>
</evidence>
<evidence type="ECO:0000305" key="15"/>
<evidence type="ECO:0000305" key="16">
    <source>
    </source>
</evidence>
<evidence type="ECO:0000312" key="17">
    <source>
        <dbReference type="HGNC" id="HGNC:12706"/>
    </source>
</evidence>
<feature type="signal peptide" evidence="1">
    <location>
        <begin position="1"/>
        <end position="22"/>
    </location>
</feature>
<feature type="chain" id="PRO_0000019718" description="Pantetheine hydrolase VNN2">
    <location>
        <begin position="23"/>
        <end position="493"/>
    </location>
</feature>
<feature type="propeptide" id="PRO_0000019719" description="Removed in mature form" evidence="1">
    <location>
        <begin position="494"/>
        <end position="520"/>
    </location>
</feature>
<feature type="domain" description="CN hydrolase" evidence="2">
    <location>
        <begin position="31"/>
        <end position="306"/>
    </location>
</feature>
<feature type="active site" description="Proton acceptor" evidence="2">
    <location>
        <position position="80"/>
    </location>
</feature>
<feature type="active site" description="Proton donor" evidence="2">
    <location>
        <position position="179"/>
    </location>
</feature>
<feature type="active site" description="Nucleophile" evidence="2">
    <location>
        <position position="211"/>
    </location>
</feature>
<feature type="lipid moiety-binding region" description="GPI-anchor amidated cysteine" evidence="1">
    <location>
        <position position="493"/>
    </location>
</feature>
<feature type="glycosylation site" description="N-linked (GlcNAc...) asparagine" evidence="1">
    <location>
        <position position="39"/>
    </location>
</feature>
<feature type="glycosylation site" description="N-linked (GlcNAc...) asparagine" evidence="1">
    <location>
        <position position="273"/>
    </location>
</feature>
<feature type="glycosylation site" description="N-linked (GlcNAc...) asparagine" evidence="1">
    <location>
        <position position="347"/>
    </location>
</feature>
<feature type="glycosylation site" description="N-linked (GlcNAc...) asparagine" evidence="1">
    <location>
        <position position="357"/>
    </location>
</feature>
<feature type="glycosylation site" description="N-linked (GlcNAc...) asparagine" evidence="7">
    <location>
        <position position="411"/>
    </location>
</feature>
<feature type="glycosylation site" description="N-linked (GlcNAc...) asparagine" evidence="1">
    <location>
        <position position="468"/>
    </location>
</feature>
<feature type="splice variant" id="VSP_044912" description="In isoform 6." evidence="13">
    <location>
        <begin position="1"/>
        <end position="53"/>
    </location>
</feature>
<feature type="splice variant" id="VSP_038554" description="In isoform 5." evidence="14">
    <original>FGHT</original>
    <variation>SAQC</variation>
    <location>
        <begin position="116"/>
        <end position="119"/>
    </location>
</feature>
<feature type="splice variant" id="VSP_038555" description="In isoform 5." evidence="14">
    <location>
        <begin position="120"/>
        <end position="520"/>
    </location>
</feature>
<feature type="splice variant" id="VSP_038557" description="In isoform 2." evidence="14">
    <location>
        <begin position="180"/>
        <end position="400"/>
    </location>
</feature>
<feature type="splice variant" id="VSP_038556" description="In isoform 4." evidence="14">
    <original>YHLYSEPQFNVPEKPE</original>
    <variation>EVVFMHQMVPKCIIMT</variation>
    <location>
        <begin position="180"/>
        <end position="195"/>
    </location>
</feature>
<feature type="splice variant" id="VSP_038558" description="In isoform 3." evidence="14">
    <original>YHLYSEPQFNVPE</original>
    <variation>ETLQSVKRSFAVI</variation>
    <location>
        <begin position="180"/>
        <end position="192"/>
    </location>
</feature>
<feature type="splice variant" id="VSP_038559" description="In isoform 3." evidence="14">
    <location>
        <begin position="193"/>
        <end position="520"/>
    </location>
</feature>
<feature type="splice variant" id="VSP_038560" description="In isoform 4." evidence="14">
    <location>
        <begin position="196"/>
        <end position="520"/>
    </location>
</feature>
<feature type="sequence variant" id="VAR_025177" description="In dbSNP:rs33950336." evidence="12">
    <original>T</original>
    <variation>N</variation>
    <location>
        <position position="17"/>
    </location>
</feature>
<feature type="sequence variant" id="VAR_031261" description="In dbSNP:rs2294760.">
    <original>V</original>
    <variation>A</variation>
    <location>
        <position position="30"/>
    </location>
</feature>
<feature type="sequence variant" id="VAR_025178" description="In dbSNP:rs35993077." evidence="12">
    <original>D</original>
    <variation>E</variation>
    <location>
        <position position="112"/>
    </location>
</feature>
<feature type="sequence variant" id="VAR_025179" description="In dbSNP:rs33920182." evidence="12">
    <original>V</original>
    <variation>I</variation>
    <location>
        <position position="241"/>
    </location>
</feature>
<feature type="sequence variant" id="VAR_025180" description="In dbSNP:rs36092168." evidence="12">
    <original>T</original>
    <variation>S</variation>
    <location>
        <position position="349"/>
    </location>
</feature>
<feature type="sequence variant" id="VAR_023530" description="In dbSNP:rs4895944." evidence="3 5 6 8 10 11 12">
    <original>L</original>
    <variation>M</variation>
    <location>
        <position position="404"/>
    </location>
</feature>
<feature type="sequence conflict" description="In Ref. 1; CAA10569." evidence="15" ref="1">
    <original>D</original>
    <variation>Y</variation>
    <location>
        <position position="218"/>
    </location>
</feature>
<keyword id="KW-0025">Alternative splicing</keyword>
<keyword id="KW-1003">Cell membrane</keyword>
<keyword id="KW-0325">Glycoprotein</keyword>
<keyword id="KW-0336">GPI-anchor</keyword>
<keyword id="KW-0378">Hydrolase</keyword>
<keyword id="KW-0449">Lipoprotein</keyword>
<keyword id="KW-0472">Membrane</keyword>
<keyword id="KW-1267">Proteomics identification</keyword>
<keyword id="KW-1185">Reference proteome</keyword>
<keyword id="KW-0732">Signal</keyword>
<sequence length="520" mass="58503">MVTSSFPISVAVFALITLQVGTQDSFIAAVYEHAVILPNKTETPVSQEDALNLMNENIDILETAIKQAAEQGARIIVTPEDALYGWKFTRETVFPYLEDIPDPQVNWIPCQDPHRFGHTPVQARLSCLAKDNSIYVLANLGDKKPCNSRDSTCPPNGYFQYNTNVVYNTEGKLVARYHKYHLYSEPQFNVPEKPELVTFNTAFGRFGIFTCFDIFFYDPGVTLVKDFHVDTILFPTAWMNVLPLLTAIEFHSAWAMGMGVNLLVANTHHVSLNMTGSGIYAPNGPKVYHYDMKTELGKLLLSEVDSHPLSSLAYPTAVNWNAYATTIKPFPVQKNTFRGFISRDGFNFTELFENAGNLTVCQKELCCHLSYRMLQKEENEVYVLGAFTGLHGRRRREYWQVCTLLKCKTTNLTTCGRPVETASTRFEMFSLSGTFGTEYVFPEVLLTEIHLSPGKFEVLKDGRLVNKNGSSGPILTVSLFGRWYTKDSLYSSCGTSNSAITYLLIFILLMIIALQNIVML</sequence>
<protein>
    <recommendedName>
        <fullName evidence="15">Pantetheine hydrolase VNN2</fullName>
        <ecNumber evidence="4">3.5.1.92</ecNumber>
    </recommendedName>
    <alternativeName>
        <fullName>Glycosylphosphatidyl inositol-anchored protein GPI-80</fullName>
    </alternativeName>
    <alternativeName>
        <fullName>Protein FOAP-4</fullName>
    </alternativeName>
    <alternativeName>
        <fullName evidence="15">Vascular non-inflammatory molecule 2</fullName>
        <shortName>Vanin-2</shortName>
    </alternativeName>
</protein>
<name>VNN2_HUMAN</name>
<organism>
    <name type="scientific">Homo sapiens</name>
    <name type="common">Human</name>
    <dbReference type="NCBI Taxonomy" id="9606"/>
    <lineage>
        <taxon>Eukaryota</taxon>
        <taxon>Metazoa</taxon>
        <taxon>Chordata</taxon>
        <taxon>Craniata</taxon>
        <taxon>Vertebrata</taxon>
        <taxon>Euteleostomi</taxon>
        <taxon>Mammalia</taxon>
        <taxon>Eutheria</taxon>
        <taxon>Euarchontoglires</taxon>
        <taxon>Primates</taxon>
        <taxon>Haplorrhini</taxon>
        <taxon>Catarrhini</taxon>
        <taxon>Hominidae</taxon>
        <taxon>Homo</taxon>
    </lineage>
</organism>
<reference key="1">
    <citation type="journal article" date="1998" name="Genomics">
        <title>Two human genes related to murine vanin-1 are located on the long arm of human chromosome 6.</title>
        <authorList>
            <person name="Galland F."/>
            <person name="Malergue F."/>
            <person name="Bazin H."/>
            <person name="Mattei M.-G."/>
            <person name="Aurrand-Lions M."/>
            <person name="Theillet C."/>
            <person name="Naquet P."/>
        </authorList>
    </citation>
    <scope>NUCLEOTIDE SEQUENCE [MRNA] (ISOFORM 1)</scope>
    <scope>VARIANT MET-404</scope>
    <source>
        <tissue>Kidney</tissue>
    </source>
</reference>
<reference key="2">
    <citation type="journal article" date="1999" name="J. Immunol.">
        <title>A novel glycosylphosphatidyl inositol-anchored protein on human leukocytes: a possible role for regulation of neutrophil adherence and migration.</title>
        <authorList>
            <person name="Suzuki K."/>
            <person name="Watanabe T."/>
            <person name="Sakurai S."/>
            <person name="Ohtake K."/>
            <person name="Kinoshita T."/>
            <person name="Araki A."/>
            <person name="Fujita T."/>
            <person name="Takei H."/>
            <person name="Takeda Y."/>
            <person name="Sato Y."/>
            <person name="Yamashita T."/>
            <person name="Araki Y."/>
            <person name="Sendo F."/>
        </authorList>
    </citation>
    <scope>NUCLEOTIDE SEQUENCE [MRNA] (ISOFORM 1)</scope>
    <scope>VARIANT MET-404</scope>
    <source>
        <tissue>Peripheral blood</tissue>
    </source>
</reference>
<reference key="3">
    <citation type="journal article" date="2008" name="Gene">
        <title>Alternative spliced variants in the pantetheinase family of genes expressed in human neutrophils.</title>
        <authorList>
            <person name="Nitto T."/>
            <person name="Inoue T."/>
            <person name="Node K."/>
        </authorList>
    </citation>
    <scope>NUCLEOTIDE SEQUENCE [MRNA] (ISOFORMS 2; 3; 4 AND 5)</scope>
    <scope>VARIANT MET-404</scope>
    <source>
        <tissue>Neutrophil</tissue>
    </source>
</reference>
<reference key="4">
    <citation type="submission" date="1999-04" db="EMBL/GenBank/DDBJ databases">
        <title>Homo sapiens mRNA for FOAP-4 protein, complete cds.</title>
        <authorList>
            <person name="Takayama K."/>
            <person name="Fujii Y."/>
            <person name="Tsuritani K."/>
            <person name="Yajima Y."/>
            <person name="Amemiya T."/>
            <person name="Ukai Y."/>
            <person name="Naito K."/>
            <person name="Kawaguchi A."/>
        </authorList>
    </citation>
    <scope>NUCLEOTIDE SEQUENCE [MRNA] (ISOFORM 1)</scope>
    <scope>VARIANT MET-404</scope>
    <source>
        <tissue>Blood</tissue>
    </source>
</reference>
<reference key="5">
    <citation type="journal article" date="2004" name="Nat. Genet.">
        <title>Complete sequencing and characterization of 21,243 full-length human cDNAs.</title>
        <authorList>
            <person name="Ota T."/>
            <person name="Suzuki Y."/>
            <person name="Nishikawa T."/>
            <person name="Otsuki T."/>
            <person name="Sugiyama T."/>
            <person name="Irie R."/>
            <person name="Wakamatsu A."/>
            <person name="Hayashi K."/>
            <person name="Sato H."/>
            <person name="Nagai K."/>
            <person name="Kimura K."/>
            <person name="Makita H."/>
            <person name="Sekine M."/>
            <person name="Obayashi M."/>
            <person name="Nishi T."/>
            <person name="Shibahara T."/>
            <person name="Tanaka T."/>
            <person name="Ishii S."/>
            <person name="Yamamoto J."/>
            <person name="Saito K."/>
            <person name="Kawai Y."/>
            <person name="Isono Y."/>
            <person name="Nakamura Y."/>
            <person name="Nagahari K."/>
            <person name="Murakami K."/>
            <person name="Yasuda T."/>
            <person name="Iwayanagi T."/>
            <person name="Wagatsuma M."/>
            <person name="Shiratori A."/>
            <person name="Sudo H."/>
            <person name="Hosoiri T."/>
            <person name="Kaku Y."/>
            <person name="Kodaira H."/>
            <person name="Kondo H."/>
            <person name="Sugawara M."/>
            <person name="Takahashi M."/>
            <person name="Kanda K."/>
            <person name="Yokoi T."/>
            <person name="Furuya T."/>
            <person name="Kikkawa E."/>
            <person name="Omura Y."/>
            <person name="Abe K."/>
            <person name="Kamihara K."/>
            <person name="Katsuta N."/>
            <person name="Sato K."/>
            <person name="Tanikawa M."/>
            <person name="Yamazaki M."/>
            <person name="Ninomiya K."/>
            <person name="Ishibashi T."/>
            <person name="Yamashita H."/>
            <person name="Murakawa K."/>
            <person name="Fujimori K."/>
            <person name="Tanai H."/>
            <person name="Kimata M."/>
            <person name="Watanabe M."/>
            <person name="Hiraoka S."/>
            <person name="Chiba Y."/>
            <person name="Ishida S."/>
            <person name="Ono Y."/>
            <person name="Takiguchi S."/>
            <person name="Watanabe S."/>
            <person name="Yosida M."/>
            <person name="Hotuta T."/>
            <person name="Kusano J."/>
            <person name="Kanehori K."/>
            <person name="Takahashi-Fujii A."/>
            <person name="Hara H."/>
            <person name="Tanase T.-O."/>
            <person name="Nomura Y."/>
            <person name="Togiya S."/>
            <person name="Komai F."/>
            <person name="Hara R."/>
            <person name="Takeuchi K."/>
            <person name="Arita M."/>
            <person name="Imose N."/>
            <person name="Musashino K."/>
            <person name="Yuuki H."/>
            <person name="Oshima A."/>
            <person name="Sasaki N."/>
            <person name="Aotsuka S."/>
            <person name="Yoshikawa Y."/>
            <person name="Matsunawa H."/>
            <person name="Ichihara T."/>
            <person name="Shiohata N."/>
            <person name="Sano S."/>
            <person name="Moriya S."/>
            <person name="Momiyama H."/>
            <person name="Satoh N."/>
            <person name="Takami S."/>
            <person name="Terashima Y."/>
            <person name="Suzuki O."/>
            <person name="Nakagawa S."/>
            <person name="Senoh A."/>
            <person name="Mizoguchi H."/>
            <person name="Goto Y."/>
            <person name="Shimizu F."/>
            <person name="Wakebe H."/>
            <person name="Hishigaki H."/>
            <person name="Watanabe T."/>
            <person name="Sugiyama A."/>
            <person name="Takemoto M."/>
            <person name="Kawakami B."/>
            <person name="Yamazaki M."/>
            <person name="Watanabe K."/>
            <person name="Kumagai A."/>
            <person name="Itakura S."/>
            <person name="Fukuzumi Y."/>
            <person name="Fujimori Y."/>
            <person name="Komiyama M."/>
            <person name="Tashiro H."/>
            <person name="Tanigami A."/>
            <person name="Fujiwara T."/>
            <person name="Ono T."/>
            <person name="Yamada K."/>
            <person name="Fujii Y."/>
            <person name="Ozaki K."/>
            <person name="Hirao M."/>
            <person name="Ohmori Y."/>
            <person name="Kawabata A."/>
            <person name="Hikiji T."/>
            <person name="Kobatake N."/>
            <person name="Inagaki H."/>
            <person name="Ikema Y."/>
            <person name="Okamoto S."/>
            <person name="Okitani R."/>
            <person name="Kawakami T."/>
            <person name="Noguchi S."/>
            <person name="Itoh T."/>
            <person name="Shigeta K."/>
            <person name="Senba T."/>
            <person name="Matsumura K."/>
            <person name="Nakajima Y."/>
            <person name="Mizuno T."/>
            <person name="Morinaga M."/>
            <person name="Sasaki M."/>
            <person name="Togashi T."/>
            <person name="Oyama M."/>
            <person name="Hata H."/>
            <person name="Watanabe M."/>
            <person name="Komatsu T."/>
            <person name="Mizushima-Sugano J."/>
            <person name="Satoh T."/>
            <person name="Shirai Y."/>
            <person name="Takahashi Y."/>
            <person name="Nakagawa K."/>
            <person name="Okumura K."/>
            <person name="Nagase T."/>
            <person name="Nomura N."/>
            <person name="Kikuchi H."/>
            <person name="Masuho Y."/>
            <person name="Yamashita R."/>
            <person name="Nakai K."/>
            <person name="Yada T."/>
            <person name="Nakamura Y."/>
            <person name="Ohara O."/>
            <person name="Isogai T."/>
            <person name="Sugano S."/>
        </authorList>
    </citation>
    <scope>NUCLEOTIDE SEQUENCE [LARGE SCALE MRNA] (ISOFORMS 1 AND 6)</scope>
    <scope>VARIANT MET-404</scope>
    <source>
        <tissue>Synovium</tissue>
    </source>
</reference>
<reference key="6">
    <citation type="submission" date="2005-10" db="EMBL/GenBank/DDBJ databases">
        <authorList>
            <consortium name="NIEHS SNPs program"/>
        </authorList>
    </citation>
    <scope>NUCLEOTIDE SEQUENCE [GENOMIC DNA]</scope>
    <scope>VARIANTS ASN-17; GLU-112; ILE-241; SER-349 AND MET-404</scope>
</reference>
<reference key="7">
    <citation type="journal article" date="2003" name="Nature">
        <title>The DNA sequence and analysis of human chromosome 6.</title>
        <authorList>
            <person name="Mungall A.J."/>
            <person name="Palmer S.A."/>
            <person name="Sims S.K."/>
            <person name="Edwards C.A."/>
            <person name="Ashurst J.L."/>
            <person name="Wilming L."/>
            <person name="Jones M.C."/>
            <person name="Horton R."/>
            <person name="Hunt S.E."/>
            <person name="Scott C.E."/>
            <person name="Gilbert J.G.R."/>
            <person name="Clamp M.E."/>
            <person name="Bethel G."/>
            <person name="Milne S."/>
            <person name="Ainscough R."/>
            <person name="Almeida J.P."/>
            <person name="Ambrose K.D."/>
            <person name="Andrews T.D."/>
            <person name="Ashwell R.I.S."/>
            <person name="Babbage A.K."/>
            <person name="Bagguley C.L."/>
            <person name="Bailey J."/>
            <person name="Banerjee R."/>
            <person name="Barker D.J."/>
            <person name="Barlow K.F."/>
            <person name="Bates K."/>
            <person name="Beare D.M."/>
            <person name="Beasley H."/>
            <person name="Beasley O."/>
            <person name="Bird C.P."/>
            <person name="Blakey S.E."/>
            <person name="Bray-Allen S."/>
            <person name="Brook J."/>
            <person name="Brown A.J."/>
            <person name="Brown J.Y."/>
            <person name="Burford D.C."/>
            <person name="Burrill W."/>
            <person name="Burton J."/>
            <person name="Carder C."/>
            <person name="Carter N.P."/>
            <person name="Chapman J.C."/>
            <person name="Clark S.Y."/>
            <person name="Clark G."/>
            <person name="Clee C.M."/>
            <person name="Clegg S."/>
            <person name="Cobley V."/>
            <person name="Collier R.E."/>
            <person name="Collins J.E."/>
            <person name="Colman L.K."/>
            <person name="Corby N.R."/>
            <person name="Coville G.J."/>
            <person name="Culley K.M."/>
            <person name="Dhami P."/>
            <person name="Davies J."/>
            <person name="Dunn M."/>
            <person name="Earthrowl M.E."/>
            <person name="Ellington A.E."/>
            <person name="Evans K.A."/>
            <person name="Faulkner L."/>
            <person name="Francis M.D."/>
            <person name="Frankish A."/>
            <person name="Frankland J."/>
            <person name="French L."/>
            <person name="Garner P."/>
            <person name="Garnett J."/>
            <person name="Ghori M.J."/>
            <person name="Gilby L.M."/>
            <person name="Gillson C.J."/>
            <person name="Glithero R.J."/>
            <person name="Grafham D.V."/>
            <person name="Grant M."/>
            <person name="Gribble S."/>
            <person name="Griffiths C."/>
            <person name="Griffiths M.N.D."/>
            <person name="Hall R."/>
            <person name="Halls K.S."/>
            <person name="Hammond S."/>
            <person name="Harley J.L."/>
            <person name="Hart E.A."/>
            <person name="Heath P.D."/>
            <person name="Heathcott R."/>
            <person name="Holmes S.J."/>
            <person name="Howden P.J."/>
            <person name="Howe K.L."/>
            <person name="Howell G.R."/>
            <person name="Huckle E."/>
            <person name="Humphray S.J."/>
            <person name="Humphries M.D."/>
            <person name="Hunt A.R."/>
            <person name="Johnson C.M."/>
            <person name="Joy A.A."/>
            <person name="Kay M."/>
            <person name="Keenan S.J."/>
            <person name="Kimberley A.M."/>
            <person name="King A."/>
            <person name="Laird G.K."/>
            <person name="Langford C."/>
            <person name="Lawlor S."/>
            <person name="Leongamornlert D.A."/>
            <person name="Leversha M."/>
            <person name="Lloyd C.R."/>
            <person name="Lloyd D.M."/>
            <person name="Loveland J.E."/>
            <person name="Lovell J."/>
            <person name="Martin S."/>
            <person name="Mashreghi-Mohammadi M."/>
            <person name="Maslen G.L."/>
            <person name="Matthews L."/>
            <person name="McCann O.T."/>
            <person name="McLaren S.J."/>
            <person name="McLay K."/>
            <person name="McMurray A."/>
            <person name="Moore M.J.F."/>
            <person name="Mullikin J.C."/>
            <person name="Niblett D."/>
            <person name="Nickerson T."/>
            <person name="Novik K.L."/>
            <person name="Oliver K."/>
            <person name="Overton-Larty E.K."/>
            <person name="Parker A."/>
            <person name="Patel R."/>
            <person name="Pearce A.V."/>
            <person name="Peck A.I."/>
            <person name="Phillimore B.J.C.T."/>
            <person name="Phillips S."/>
            <person name="Plumb R.W."/>
            <person name="Porter K.M."/>
            <person name="Ramsey Y."/>
            <person name="Ranby S.A."/>
            <person name="Rice C.M."/>
            <person name="Ross M.T."/>
            <person name="Searle S.M."/>
            <person name="Sehra H.K."/>
            <person name="Sheridan E."/>
            <person name="Skuce C.D."/>
            <person name="Smith S."/>
            <person name="Smith M."/>
            <person name="Spraggon L."/>
            <person name="Squares S.L."/>
            <person name="Steward C.A."/>
            <person name="Sycamore N."/>
            <person name="Tamlyn-Hall G."/>
            <person name="Tester J."/>
            <person name="Theaker A.J."/>
            <person name="Thomas D.W."/>
            <person name="Thorpe A."/>
            <person name="Tracey A."/>
            <person name="Tromans A."/>
            <person name="Tubby B."/>
            <person name="Wall M."/>
            <person name="Wallis J.M."/>
            <person name="West A.P."/>
            <person name="White S.S."/>
            <person name="Whitehead S.L."/>
            <person name="Whittaker H."/>
            <person name="Wild A."/>
            <person name="Willey D.J."/>
            <person name="Wilmer T.E."/>
            <person name="Wood J.M."/>
            <person name="Wray P.W."/>
            <person name="Wyatt J.C."/>
            <person name="Young L."/>
            <person name="Younger R.M."/>
            <person name="Bentley D.R."/>
            <person name="Coulson A."/>
            <person name="Durbin R.M."/>
            <person name="Hubbard T."/>
            <person name="Sulston J.E."/>
            <person name="Dunham I."/>
            <person name="Rogers J."/>
            <person name="Beck S."/>
        </authorList>
    </citation>
    <scope>NUCLEOTIDE SEQUENCE [LARGE SCALE GENOMIC DNA]</scope>
</reference>
<reference key="8">
    <citation type="submission" date="2005-09" db="EMBL/GenBank/DDBJ databases">
        <authorList>
            <person name="Mural R.J."/>
            <person name="Istrail S."/>
            <person name="Sutton G."/>
            <person name="Florea L."/>
            <person name="Halpern A.L."/>
            <person name="Mobarry C.M."/>
            <person name="Lippert R."/>
            <person name="Walenz B."/>
            <person name="Shatkay H."/>
            <person name="Dew I."/>
            <person name="Miller J.R."/>
            <person name="Flanigan M.J."/>
            <person name="Edwards N.J."/>
            <person name="Bolanos R."/>
            <person name="Fasulo D."/>
            <person name="Halldorsson B.V."/>
            <person name="Hannenhalli S."/>
            <person name="Turner R."/>
            <person name="Yooseph S."/>
            <person name="Lu F."/>
            <person name="Nusskern D.R."/>
            <person name="Shue B.C."/>
            <person name="Zheng X.H."/>
            <person name="Zhong F."/>
            <person name="Delcher A.L."/>
            <person name="Huson D.H."/>
            <person name="Kravitz S.A."/>
            <person name="Mouchard L."/>
            <person name="Reinert K."/>
            <person name="Remington K.A."/>
            <person name="Clark A.G."/>
            <person name="Waterman M.S."/>
            <person name="Eichler E.E."/>
            <person name="Adams M.D."/>
            <person name="Hunkapiller M.W."/>
            <person name="Myers E.W."/>
            <person name="Venter J.C."/>
        </authorList>
    </citation>
    <scope>NUCLEOTIDE SEQUENCE [LARGE SCALE GENOMIC DNA]</scope>
</reference>
<reference key="9">
    <citation type="journal article" date="2004" name="Genome Res.">
        <title>The status, quality, and expansion of the NIH full-length cDNA project: the Mammalian Gene Collection (MGC).</title>
        <authorList>
            <consortium name="The MGC Project Team"/>
        </authorList>
    </citation>
    <scope>NUCLEOTIDE SEQUENCE [LARGE SCALE MRNA] (ISOFORM 1)</scope>
    <scope>VARIANT MET-404</scope>
</reference>
<reference key="10">
    <citation type="journal article" date="2001" name="Immunogenetics">
        <title>Vanin genes are clustered (human 6q22-24 and mouse 10A2B1) and encode isoforms of pantetheinase ectoenzymes.</title>
        <authorList>
            <person name="Martin F."/>
            <person name="Malergue F."/>
            <person name="Pitari G."/>
            <person name="Philippe J.M."/>
            <person name="Philips S."/>
            <person name="Chabret C."/>
            <person name="Granjeaud S."/>
            <person name="Mattei M.G."/>
            <person name="Mungall A.J."/>
            <person name="Naquet P."/>
            <person name="Galland F."/>
        </authorList>
    </citation>
    <scope>FUNCTION</scope>
    <scope>CATALYTIC ACTIVITY</scope>
</reference>
<reference key="11">
    <citation type="journal article" date="2005" name="J. Proteome Res.">
        <title>Human plasma N-glycoproteome analysis by immunoaffinity subtraction, hydrazide chemistry, and mass spectrometry.</title>
        <authorList>
            <person name="Liu T."/>
            <person name="Qian W.-J."/>
            <person name="Gritsenko M.A."/>
            <person name="Camp D.G. II"/>
            <person name="Monroe M.E."/>
            <person name="Moore R.J."/>
            <person name="Smith R.D."/>
        </authorList>
    </citation>
    <scope>GLYCOSYLATION [LARGE SCALE ANALYSIS] AT ASN-411</scope>
    <source>
        <tissue>Plasma</tissue>
    </source>
</reference>
<reference key="12">
    <citation type="journal article" date="2009" name="J. Invest. Dermatol.">
        <title>Expression of the vanin gene family in normal and inflamed human skin: induction by proinflammatory cytokines.</title>
        <authorList>
            <person name="Jansen P.A.M."/>
            <person name="Kamsteeg M."/>
            <person name="Rodijk-Olthuis D."/>
            <person name="van Vlijmen-Willems I.M.J.J."/>
            <person name="de Jongh G.J."/>
            <person name="Bergers M."/>
            <person name="Tjabringa G.S."/>
            <person name="Zeeuwen P.L.J.M."/>
            <person name="Schalkwijk J."/>
        </authorList>
    </citation>
    <scope>TISSUE SPECIFICITY</scope>
</reference>